<proteinExistence type="evidence at transcript level"/>
<name>TAFA5_BOVIN</name>
<evidence type="ECO:0000250" key="1">
    <source>
        <dbReference type="UniProtKB" id="M0R7X9"/>
    </source>
</evidence>
<evidence type="ECO:0000250" key="2">
    <source>
        <dbReference type="UniProtKB" id="Q7Z5A7"/>
    </source>
</evidence>
<evidence type="ECO:0000250" key="3">
    <source>
        <dbReference type="UniProtKB" id="Q91WE9"/>
    </source>
</evidence>
<evidence type="ECO:0000255" key="4">
    <source>
        <dbReference type="PROSITE-ProRule" id="PRU00498"/>
    </source>
</evidence>
<evidence type="ECO:0000305" key="5"/>
<sequence length="132" mass="14329">MAPSPRTGSRQDATALPSMSSTFWAFMILASLLIAYCSQLAAGTCEIVTLDRDSSQPRRTIARQTARCACRKGQIAGTTRARPACVDARIIRTKQWCDMLPCLEGEGCDLLINRSGWTCTQPGGRIKTTTVS</sequence>
<reference key="1">
    <citation type="submission" date="2005-08" db="EMBL/GenBank/DDBJ databases">
        <authorList>
            <consortium name="NIH - Mammalian Gene Collection (MGC) project"/>
        </authorList>
    </citation>
    <scope>NUCLEOTIDE SEQUENCE [LARGE SCALE MRNA]</scope>
    <source>
        <strain>Hereford</strain>
        <tissue>Kidney</tissue>
    </source>
</reference>
<protein>
    <recommendedName>
        <fullName>Chemokine-like protein TAFA-5</fullName>
    </recommendedName>
</protein>
<accession>Q3ZBS2</accession>
<dbReference type="EMBL" id="BC103140">
    <property type="protein sequence ID" value="AAI03141.1"/>
    <property type="status" value="ALT_INIT"/>
    <property type="molecule type" value="mRNA"/>
</dbReference>
<dbReference type="RefSeq" id="NP_001070468.2">
    <property type="nucleotide sequence ID" value="NM_001077000.3"/>
</dbReference>
<dbReference type="FunCoup" id="Q3ZBS2">
    <property type="interactions" value="972"/>
</dbReference>
<dbReference type="STRING" id="9913.ENSBTAP00000031185"/>
<dbReference type="GlyCosmos" id="Q3ZBS2">
    <property type="glycosylation" value="1 site, No reported glycans"/>
</dbReference>
<dbReference type="GlyGen" id="Q3ZBS2">
    <property type="glycosylation" value="1 site"/>
</dbReference>
<dbReference type="PaxDb" id="9913-ENSBTAP00000031185"/>
<dbReference type="Ensembl" id="ENSBTAT00000031229.6">
    <property type="protein sequence ID" value="ENSBTAP00000031185.6"/>
    <property type="gene ID" value="ENSBTAG00000022986.6"/>
</dbReference>
<dbReference type="GeneID" id="767927"/>
<dbReference type="KEGG" id="bta:767927"/>
<dbReference type="CTD" id="25817"/>
<dbReference type="VGNC" id="VGNC:28779">
    <property type="gene designation" value="TAFA5"/>
</dbReference>
<dbReference type="eggNOG" id="ENOG502RZT2">
    <property type="taxonomic scope" value="Eukaryota"/>
</dbReference>
<dbReference type="GeneTree" id="ENSGT00940000160682"/>
<dbReference type="HOGENOM" id="CLU_126078_5_1_1"/>
<dbReference type="InParanoid" id="Q3ZBS2"/>
<dbReference type="OrthoDB" id="8957936at2759"/>
<dbReference type="Proteomes" id="UP000009136">
    <property type="component" value="Chromosome 5"/>
</dbReference>
<dbReference type="GO" id="GO:0005737">
    <property type="term" value="C:cytoplasm"/>
    <property type="evidence" value="ECO:0007669"/>
    <property type="project" value="Ensembl"/>
</dbReference>
<dbReference type="GO" id="GO:0005615">
    <property type="term" value="C:extracellular space"/>
    <property type="evidence" value="ECO:0000318"/>
    <property type="project" value="GO_Central"/>
</dbReference>
<dbReference type="GO" id="GO:0005125">
    <property type="term" value="F:cytokine activity"/>
    <property type="evidence" value="ECO:0007669"/>
    <property type="project" value="UniProtKB-KW"/>
</dbReference>
<dbReference type="GO" id="GO:0001664">
    <property type="term" value="F:G protein-coupled receptor binding"/>
    <property type="evidence" value="ECO:0000318"/>
    <property type="project" value="GO_Central"/>
</dbReference>
<dbReference type="GO" id="GO:0048018">
    <property type="term" value="F:receptor ligand activity"/>
    <property type="evidence" value="ECO:0000318"/>
    <property type="project" value="GO_Central"/>
</dbReference>
<dbReference type="GO" id="GO:0007186">
    <property type="term" value="P:G protein-coupled receptor signaling pathway"/>
    <property type="evidence" value="ECO:0000318"/>
    <property type="project" value="GO_Central"/>
</dbReference>
<dbReference type="GO" id="GO:1904706">
    <property type="term" value="P:negative regulation of vascular associated smooth muscle cell proliferation"/>
    <property type="evidence" value="ECO:0007669"/>
    <property type="project" value="Ensembl"/>
</dbReference>
<dbReference type="GO" id="GO:0061044">
    <property type="term" value="P:negative regulation of vascular wound healing"/>
    <property type="evidence" value="ECO:0007669"/>
    <property type="project" value="Ensembl"/>
</dbReference>
<dbReference type="InterPro" id="IPR020350">
    <property type="entry name" value="Chemokine-like_TAFA"/>
</dbReference>
<dbReference type="InterPro" id="IPR040329">
    <property type="entry name" value="TAFA-5"/>
</dbReference>
<dbReference type="PANTHER" id="PTHR31878:SF0">
    <property type="entry name" value="CHEMOKINE-LIKE PROTEIN TAFA-5"/>
    <property type="match status" value="1"/>
</dbReference>
<dbReference type="PANTHER" id="PTHR31878">
    <property type="entry name" value="CHEMOKINE-LIKE PROTEIN TAFA-5-RELATED"/>
    <property type="match status" value="1"/>
</dbReference>
<dbReference type="Pfam" id="PF12020">
    <property type="entry name" value="TAFA"/>
    <property type="match status" value="1"/>
</dbReference>
<comment type="function">
    <text evidence="1 3">Acts as a chemokine-like protein by regulating cell proliferation and migration through activation of G protein-coupled receptors (GPCRs), such as S1PR2 and FPR2 (By similarity). Stimulates chemotactic migration of macrophages mediated by the MAPK3/ERK1 and AKT1 pathway (By similarity). Blocks TNFSF11/RANKL-induced osteoclast formation from macrophages by inhibiting up-regulation of osteoclast fusogenic and differentiation genes (By similarity). Stimulation of macrophage migration and inhibition of osteoclast formation is mediated through the GPCR FPR2 (By similarity). Acts as an adipokine by negatively regulating vascular smooth muscle cell (VSMC) proliferation and migration in response to platelet-derived growth factor stimulation via GPCR S1PR2 and G protein GNA12/GNA13-transmitted RHOA signaling (By similarity). Inhibits injury-induced cell proliferation and neointima formation in the femoral arteries (By similarity).</text>
</comment>
<comment type="subcellular location">
    <subcellularLocation>
        <location evidence="2">Secreted</location>
    </subcellularLocation>
</comment>
<comment type="similarity">
    <text evidence="5">Belongs to the TAFA family.</text>
</comment>
<comment type="sequence caution" evidence="5">
    <conflict type="erroneous initiation">
        <sequence resource="EMBL-CDS" id="AAI03141"/>
    </conflict>
    <text>Truncated N-terminus.</text>
</comment>
<gene>
    <name type="primary">TAFA5</name>
    <name type="synonym">FAM19A5</name>
</gene>
<organism>
    <name type="scientific">Bos taurus</name>
    <name type="common">Bovine</name>
    <dbReference type="NCBI Taxonomy" id="9913"/>
    <lineage>
        <taxon>Eukaryota</taxon>
        <taxon>Metazoa</taxon>
        <taxon>Chordata</taxon>
        <taxon>Craniata</taxon>
        <taxon>Vertebrata</taxon>
        <taxon>Euteleostomi</taxon>
        <taxon>Mammalia</taxon>
        <taxon>Eutheria</taxon>
        <taxon>Laurasiatheria</taxon>
        <taxon>Artiodactyla</taxon>
        <taxon>Ruminantia</taxon>
        <taxon>Pecora</taxon>
        <taxon>Bovidae</taxon>
        <taxon>Bovinae</taxon>
        <taxon>Bos</taxon>
    </lineage>
</organism>
<feature type="signal peptide" evidence="2">
    <location>
        <begin position="1"/>
        <end position="43"/>
    </location>
</feature>
<feature type="chain" id="PRO_0000042731" description="Chemokine-like protein TAFA-5" evidence="2">
    <location>
        <begin position="44"/>
        <end position="132"/>
    </location>
</feature>
<feature type="glycosylation site" description="N-linked (GlcNAc...) asparagine" evidence="4">
    <location>
        <position position="113"/>
    </location>
</feature>
<keyword id="KW-0202">Cytokine</keyword>
<keyword id="KW-0325">Glycoprotein</keyword>
<keyword id="KW-1185">Reference proteome</keyword>
<keyword id="KW-0964">Secreted</keyword>
<keyword id="KW-0732">Signal</keyword>